<protein>
    <recommendedName>
        <fullName>Uncharacterized protein YjbE</fullName>
    </recommendedName>
</protein>
<dbReference type="EMBL" id="AE005174">
    <property type="protein sequence ID" value="AAG59225.1"/>
    <property type="molecule type" value="Genomic_DNA"/>
</dbReference>
<dbReference type="EMBL" id="BA000007">
    <property type="protein sequence ID" value="BAB38432.1"/>
    <property type="molecule type" value="Genomic_DNA"/>
</dbReference>
<dbReference type="PIR" id="A91255">
    <property type="entry name" value="A91255"/>
</dbReference>
<dbReference type="PIR" id="E86095">
    <property type="entry name" value="E86095"/>
</dbReference>
<dbReference type="RefSeq" id="NP_313036.1">
    <property type="nucleotide sequence ID" value="NC_002695.1"/>
</dbReference>
<dbReference type="RefSeq" id="WP_000757333.1">
    <property type="nucleotide sequence ID" value="NZ_VOAI01000027.1"/>
</dbReference>
<dbReference type="STRING" id="155864.Z5624"/>
<dbReference type="GeneID" id="75204169"/>
<dbReference type="GeneID" id="914327"/>
<dbReference type="KEGG" id="ece:Z5624"/>
<dbReference type="KEGG" id="ecs:ECs_5009"/>
<dbReference type="PATRIC" id="fig|386585.9.peg.5230"/>
<dbReference type="eggNOG" id="ENOG5032T2M">
    <property type="taxonomic scope" value="Bacteria"/>
</dbReference>
<dbReference type="HOGENOM" id="CLU_171058_2_0_6"/>
<dbReference type="Proteomes" id="UP000000558">
    <property type="component" value="Chromosome"/>
</dbReference>
<dbReference type="Proteomes" id="UP000002519">
    <property type="component" value="Chromosome"/>
</dbReference>
<dbReference type="InterPro" id="IPR025858">
    <property type="entry name" value="YjbE"/>
</dbReference>
<dbReference type="Pfam" id="PF11106">
    <property type="entry name" value="YjbE"/>
    <property type="match status" value="1"/>
</dbReference>
<organism>
    <name type="scientific">Escherichia coli O157:H7</name>
    <dbReference type="NCBI Taxonomy" id="83334"/>
    <lineage>
        <taxon>Bacteria</taxon>
        <taxon>Pseudomonadati</taxon>
        <taxon>Pseudomonadota</taxon>
        <taxon>Gammaproteobacteria</taxon>
        <taxon>Enterobacterales</taxon>
        <taxon>Enterobacteriaceae</taxon>
        <taxon>Escherichia</taxon>
    </lineage>
</organism>
<sequence>MKKVLYGIFAISALAATSAWAAPVQVGEAAGSAATSVSAGSSSATSVSTVSSAVGVALAATGGGDGSNTGTTTTTTTSTQ</sequence>
<feature type="signal peptide" evidence="1">
    <location>
        <begin position="1"/>
        <end position="21"/>
    </location>
</feature>
<feature type="chain" id="PRO_0000044591" description="Uncharacterized protein YjbE">
    <location>
        <begin position="22"/>
        <end position="80"/>
    </location>
</feature>
<feature type="region of interest" description="Disordered" evidence="2">
    <location>
        <begin position="59"/>
        <end position="80"/>
    </location>
</feature>
<feature type="compositionally biased region" description="Low complexity" evidence="2">
    <location>
        <begin position="68"/>
        <end position="80"/>
    </location>
</feature>
<gene>
    <name type="primary">yjbE</name>
    <name type="ordered locus">Z5624</name>
    <name type="ordered locus">ECs5009</name>
</gene>
<proteinExistence type="inferred from homology"/>
<evidence type="ECO:0000255" key="1"/>
<evidence type="ECO:0000256" key="2">
    <source>
        <dbReference type="SAM" id="MobiDB-lite"/>
    </source>
</evidence>
<keyword id="KW-1185">Reference proteome</keyword>
<keyword id="KW-0732">Signal</keyword>
<accession>P0AF47</accession>
<accession>P32686</accession>
<accession>Q9Z3E1</accession>
<name>YJBE_ECO57</name>
<reference key="1">
    <citation type="journal article" date="2001" name="Nature">
        <title>Genome sequence of enterohaemorrhagic Escherichia coli O157:H7.</title>
        <authorList>
            <person name="Perna N.T."/>
            <person name="Plunkett G. III"/>
            <person name="Burland V."/>
            <person name="Mau B."/>
            <person name="Glasner J.D."/>
            <person name="Rose D.J."/>
            <person name="Mayhew G.F."/>
            <person name="Evans P.S."/>
            <person name="Gregor J."/>
            <person name="Kirkpatrick H.A."/>
            <person name="Posfai G."/>
            <person name="Hackett J."/>
            <person name="Klink S."/>
            <person name="Boutin A."/>
            <person name="Shao Y."/>
            <person name="Miller L."/>
            <person name="Grotbeck E.J."/>
            <person name="Davis N.W."/>
            <person name="Lim A."/>
            <person name="Dimalanta E.T."/>
            <person name="Potamousis K."/>
            <person name="Apodaca J."/>
            <person name="Anantharaman T.S."/>
            <person name="Lin J."/>
            <person name="Yen G."/>
            <person name="Schwartz D.C."/>
            <person name="Welch R.A."/>
            <person name="Blattner F.R."/>
        </authorList>
    </citation>
    <scope>NUCLEOTIDE SEQUENCE [LARGE SCALE GENOMIC DNA]</scope>
    <source>
        <strain>O157:H7 / EDL933 / ATCC 700927 / EHEC</strain>
    </source>
</reference>
<reference key="2">
    <citation type="journal article" date="2001" name="DNA Res.">
        <title>Complete genome sequence of enterohemorrhagic Escherichia coli O157:H7 and genomic comparison with a laboratory strain K-12.</title>
        <authorList>
            <person name="Hayashi T."/>
            <person name="Makino K."/>
            <person name="Ohnishi M."/>
            <person name="Kurokawa K."/>
            <person name="Ishii K."/>
            <person name="Yokoyama K."/>
            <person name="Han C.-G."/>
            <person name="Ohtsubo E."/>
            <person name="Nakayama K."/>
            <person name="Murata T."/>
            <person name="Tanaka M."/>
            <person name="Tobe T."/>
            <person name="Iida T."/>
            <person name="Takami H."/>
            <person name="Honda T."/>
            <person name="Sasakawa C."/>
            <person name="Ogasawara N."/>
            <person name="Yasunaga T."/>
            <person name="Kuhara S."/>
            <person name="Shiba T."/>
            <person name="Hattori M."/>
            <person name="Shinagawa H."/>
        </authorList>
    </citation>
    <scope>NUCLEOTIDE SEQUENCE [LARGE SCALE GENOMIC DNA]</scope>
    <source>
        <strain>O157:H7 / Sakai / RIMD 0509952 / EHEC</strain>
    </source>
</reference>